<proteinExistence type="inferred from homology"/>
<protein>
    <recommendedName>
        <fullName evidence="1">Isoleucine--tRNA ligase</fullName>
        <ecNumber evidence="1">6.1.1.5</ecNumber>
    </recommendedName>
    <alternativeName>
        <fullName evidence="1">Isoleucyl-tRNA synthetase</fullName>
        <shortName evidence="1">IleRS</shortName>
    </alternativeName>
</protein>
<reference key="1">
    <citation type="journal article" date="2001" name="Science">
        <title>Complete genome sequence of a virulent isolate of Streptococcus pneumoniae.</title>
        <authorList>
            <person name="Tettelin H."/>
            <person name="Nelson K.E."/>
            <person name="Paulsen I.T."/>
            <person name="Eisen J.A."/>
            <person name="Read T.D."/>
            <person name="Peterson S.N."/>
            <person name="Heidelberg J.F."/>
            <person name="DeBoy R.T."/>
            <person name="Haft D.H."/>
            <person name="Dodson R.J."/>
            <person name="Durkin A.S."/>
            <person name="Gwinn M.L."/>
            <person name="Kolonay J.F."/>
            <person name="Nelson W.C."/>
            <person name="Peterson J.D."/>
            <person name="Umayam L.A."/>
            <person name="White O."/>
            <person name="Salzberg S.L."/>
            <person name="Lewis M.R."/>
            <person name="Radune D."/>
            <person name="Holtzapple E.K."/>
            <person name="Khouri H.M."/>
            <person name="Wolf A.M."/>
            <person name="Utterback T.R."/>
            <person name="Hansen C.L."/>
            <person name="McDonald L.A."/>
            <person name="Feldblyum T.V."/>
            <person name="Angiuoli S.V."/>
            <person name="Dickinson T."/>
            <person name="Hickey E.K."/>
            <person name="Holt I.E."/>
            <person name="Loftus B.J."/>
            <person name="Yang F."/>
            <person name="Smith H.O."/>
            <person name="Venter J.C."/>
            <person name="Dougherty B.A."/>
            <person name="Morrison D.A."/>
            <person name="Hollingshead S.K."/>
            <person name="Fraser C.M."/>
        </authorList>
    </citation>
    <scope>NUCLEOTIDE SEQUENCE [LARGE SCALE GENOMIC DNA]</scope>
    <source>
        <strain>ATCC BAA-334 / TIGR4</strain>
    </source>
</reference>
<sequence>MKLKDTLNLGKTEFPMRAGLPTKEPVWQKEWEDAKLYQRRQELNQGKPHFTLHDGPPYANGNIHVGHAMNKISKDIIVRSKSMSGFYAPFIPGWDTHGLPIEQVLSKQGVKRKEMDLVEYLKLCREYALSQVDKQREDFKRLGVSGDWENPYVTLTPDYEAAQIRVFGEMANKGYIYRGAKPVYWSWSSESALAEAEIEYHDLVSTSLYYANKVKDGKGVLDTDTYIVVWTTTPFTITASRGLTVGADIDYVLVQPAGEARKFVVAAELLTSLSEKFGWADVQVLETYRGQELNHIVTEHPWDTAVEELVILGDHVTTDSGTGIVHTAPGFGEDDYNVGIANNLEVAVTVDERGIMMKNAGPEFEGQFYEKVVPTVIEKLGNLLLAQEEISHSYPFDWRTKKPIIWRAVPQWFASVSKFRQEILDEIEKVKFHSEWGKVRLYNMIRDRGDWVISRQRAWGVPLPIFYAEDGTAIMVAETIEHVAQLFEEYGSSIWWERDAKDLLPEGFTHPGSPNGEFKKETDIMDVWFDSGSSWNGVVVNRPELTYPADLYLEGSDQYRGWFNSSLITSVANHGVAPYKQILSQGFALDGKGEKMSKSLGNTIAPSDVEKQFGAEILRLWVTSVDSSNDVRISMDILSQVSETYRKIRNTLRFLIANTSDFNPAQDTVAYDELRSVDKYMTIRFNQLVKTIRDAYADFEFLTIYKALVNFINVDLSAFYLDFAKDVVYIEGAKSLERRQMQTVFYDILVKITKLLTPILPHTAEEIWSYLEFETEDFVQLSELPEVQTFANQEEILDTWAAFMDFRGQAQKALEEARNAKVIGKSLEAHLTVYPNEVVKTLLEAVNSNVAQLLIVSELTIAEGPAPEAALSFEDVAFTVERATGEVCDRCRRIDPTTAERSYQAVICDHCASIVEENFAEAVAEGFEEK</sequence>
<gene>
    <name evidence="1" type="primary">ileS</name>
    <name type="ordered locus">SP_1659</name>
</gene>
<name>SYI_STRPN</name>
<dbReference type="EC" id="6.1.1.5" evidence="1"/>
<dbReference type="EMBL" id="AE005672">
    <property type="protein sequence ID" value="AAK75738.1"/>
    <property type="molecule type" value="Genomic_DNA"/>
</dbReference>
<dbReference type="PIR" id="A95193">
    <property type="entry name" value="A95193"/>
</dbReference>
<dbReference type="RefSeq" id="WP_000768087.1">
    <property type="nucleotide sequence ID" value="NZ_CP155539.1"/>
</dbReference>
<dbReference type="SMR" id="P0CB61"/>
<dbReference type="PaxDb" id="170187-SP_1659"/>
<dbReference type="EnsemblBacteria" id="AAK75738">
    <property type="protein sequence ID" value="AAK75738"/>
    <property type="gene ID" value="SP_1659"/>
</dbReference>
<dbReference type="KEGG" id="spn:SP_1659"/>
<dbReference type="eggNOG" id="COG0060">
    <property type="taxonomic scope" value="Bacteria"/>
</dbReference>
<dbReference type="PhylomeDB" id="P0CB61"/>
<dbReference type="BioCyc" id="SPNE170187:G1FZB-1680-MONOMER"/>
<dbReference type="Proteomes" id="UP000000585">
    <property type="component" value="Chromosome"/>
</dbReference>
<dbReference type="GO" id="GO:0005829">
    <property type="term" value="C:cytosol"/>
    <property type="evidence" value="ECO:0007669"/>
    <property type="project" value="TreeGrafter"/>
</dbReference>
<dbReference type="GO" id="GO:0002161">
    <property type="term" value="F:aminoacyl-tRNA deacylase activity"/>
    <property type="evidence" value="ECO:0007669"/>
    <property type="project" value="InterPro"/>
</dbReference>
<dbReference type="GO" id="GO:0005524">
    <property type="term" value="F:ATP binding"/>
    <property type="evidence" value="ECO:0007669"/>
    <property type="project" value="UniProtKB-UniRule"/>
</dbReference>
<dbReference type="GO" id="GO:0004822">
    <property type="term" value="F:isoleucine-tRNA ligase activity"/>
    <property type="evidence" value="ECO:0007669"/>
    <property type="project" value="UniProtKB-UniRule"/>
</dbReference>
<dbReference type="GO" id="GO:0000049">
    <property type="term" value="F:tRNA binding"/>
    <property type="evidence" value="ECO:0007669"/>
    <property type="project" value="InterPro"/>
</dbReference>
<dbReference type="GO" id="GO:0008270">
    <property type="term" value="F:zinc ion binding"/>
    <property type="evidence" value="ECO:0007669"/>
    <property type="project" value="UniProtKB-UniRule"/>
</dbReference>
<dbReference type="GO" id="GO:0006428">
    <property type="term" value="P:isoleucyl-tRNA aminoacylation"/>
    <property type="evidence" value="ECO:0007669"/>
    <property type="project" value="UniProtKB-UniRule"/>
</dbReference>
<dbReference type="CDD" id="cd07960">
    <property type="entry name" value="Anticodon_Ia_Ile_BEm"/>
    <property type="match status" value="1"/>
</dbReference>
<dbReference type="CDD" id="cd00818">
    <property type="entry name" value="IleRS_core"/>
    <property type="match status" value="1"/>
</dbReference>
<dbReference type="FunFam" id="1.10.10.830:FF:000001">
    <property type="entry name" value="Isoleucine--tRNA ligase"/>
    <property type="match status" value="1"/>
</dbReference>
<dbReference type="FunFam" id="1.10.730.20:FF:000001">
    <property type="entry name" value="Isoleucine--tRNA ligase"/>
    <property type="match status" value="1"/>
</dbReference>
<dbReference type="FunFam" id="3.40.50.620:FF:000092">
    <property type="entry name" value="Isoleucine--tRNA ligase"/>
    <property type="match status" value="1"/>
</dbReference>
<dbReference type="FunFam" id="3.90.740.10:FF:000006">
    <property type="entry name" value="Isoleucine--tRNA ligase"/>
    <property type="match status" value="1"/>
</dbReference>
<dbReference type="Gene3D" id="1.10.730.20">
    <property type="match status" value="1"/>
</dbReference>
<dbReference type="Gene3D" id="3.40.50.620">
    <property type="entry name" value="HUPs"/>
    <property type="match status" value="2"/>
</dbReference>
<dbReference type="Gene3D" id="1.10.10.830">
    <property type="entry name" value="Ile-tRNA synthetase CP2 domain-like"/>
    <property type="match status" value="1"/>
</dbReference>
<dbReference type="Gene3D" id="3.90.740.10">
    <property type="entry name" value="Valyl/Leucyl/Isoleucyl-tRNA synthetase, editing domain"/>
    <property type="match status" value="1"/>
</dbReference>
<dbReference type="HAMAP" id="MF_02002">
    <property type="entry name" value="Ile_tRNA_synth_type1"/>
    <property type="match status" value="1"/>
</dbReference>
<dbReference type="InterPro" id="IPR001412">
    <property type="entry name" value="aa-tRNA-synth_I_CS"/>
</dbReference>
<dbReference type="InterPro" id="IPR002300">
    <property type="entry name" value="aa-tRNA-synth_Ia"/>
</dbReference>
<dbReference type="InterPro" id="IPR033708">
    <property type="entry name" value="Anticodon_Ile_BEm"/>
</dbReference>
<dbReference type="InterPro" id="IPR002301">
    <property type="entry name" value="Ile-tRNA-ligase"/>
</dbReference>
<dbReference type="InterPro" id="IPR023585">
    <property type="entry name" value="Ile-tRNA-ligase_type1"/>
</dbReference>
<dbReference type="InterPro" id="IPR050081">
    <property type="entry name" value="Ile-tRNA_ligase"/>
</dbReference>
<dbReference type="InterPro" id="IPR013155">
    <property type="entry name" value="M/V/L/I-tRNA-synth_anticd-bd"/>
</dbReference>
<dbReference type="InterPro" id="IPR014729">
    <property type="entry name" value="Rossmann-like_a/b/a_fold"/>
</dbReference>
<dbReference type="InterPro" id="IPR009080">
    <property type="entry name" value="tRNAsynth_Ia_anticodon-bd"/>
</dbReference>
<dbReference type="InterPro" id="IPR009008">
    <property type="entry name" value="Val/Leu/Ile-tRNA-synth_edit"/>
</dbReference>
<dbReference type="InterPro" id="IPR010663">
    <property type="entry name" value="Znf_FPG/IleRS"/>
</dbReference>
<dbReference type="NCBIfam" id="TIGR00392">
    <property type="entry name" value="ileS"/>
    <property type="match status" value="1"/>
</dbReference>
<dbReference type="PANTHER" id="PTHR42765:SF1">
    <property type="entry name" value="ISOLEUCINE--TRNA LIGASE, MITOCHONDRIAL"/>
    <property type="match status" value="1"/>
</dbReference>
<dbReference type="PANTHER" id="PTHR42765">
    <property type="entry name" value="SOLEUCYL-TRNA SYNTHETASE"/>
    <property type="match status" value="1"/>
</dbReference>
<dbReference type="Pfam" id="PF08264">
    <property type="entry name" value="Anticodon_1"/>
    <property type="match status" value="1"/>
</dbReference>
<dbReference type="Pfam" id="PF00133">
    <property type="entry name" value="tRNA-synt_1"/>
    <property type="match status" value="1"/>
</dbReference>
<dbReference type="Pfam" id="PF06827">
    <property type="entry name" value="zf-FPG_IleRS"/>
    <property type="match status" value="1"/>
</dbReference>
<dbReference type="PRINTS" id="PR00984">
    <property type="entry name" value="TRNASYNTHILE"/>
</dbReference>
<dbReference type="SUPFAM" id="SSF47323">
    <property type="entry name" value="Anticodon-binding domain of a subclass of class I aminoacyl-tRNA synthetases"/>
    <property type="match status" value="1"/>
</dbReference>
<dbReference type="SUPFAM" id="SSF52374">
    <property type="entry name" value="Nucleotidylyl transferase"/>
    <property type="match status" value="1"/>
</dbReference>
<dbReference type="SUPFAM" id="SSF50677">
    <property type="entry name" value="ValRS/IleRS/LeuRS editing domain"/>
    <property type="match status" value="1"/>
</dbReference>
<dbReference type="PROSITE" id="PS00178">
    <property type="entry name" value="AA_TRNA_LIGASE_I"/>
    <property type="match status" value="1"/>
</dbReference>
<comment type="function">
    <text evidence="1">Catalyzes the attachment of isoleucine to tRNA(Ile). As IleRS can inadvertently accommodate and process structurally similar amino acids such as valine, to avoid such errors it has two additional distinct tRNA(Ile)-dependent editing activities. One activity is designated as 'pretransfer' editing and involves the hydrolysis of activated Val-AMP. The other activity is designated 'posttransfer' editing and involves deacylation of mischarged Val-tRNA(Ile).</text>
</comment>
<comment type="catalytic activity">
    <reaction evidence="1">
        <text>tRNA(Ile) + L-isoleucine + ATP = L-isoleucyl-tRNA(Ile) + AMP + diphosphate</text>
        <dbReference type="Rhea" id="RHEA:11060"/>
        <dbReference type="Rhea" id="RHEA-COMP:9666"/>
        <dbReference type="Rhea" id="RHEA-COMP:9695"/>
        <dbReference type="ChEBI" id="CHEBI:30616"/>
        <dbReference type="ChEBI" id="CHEBI:33019"/>
        <dbReference type="ChEBI" id="CHEBI:58045"/>
        <dbReference type="ChEBI" id="CHEBI:78442"/>
        <dbReference type="ChEBI" id="CHEBI:78528"/>
        <dbReference type="ChEBI" id="CHEBI:456215"/>
        <dbReference type="EC" id="6.1.1.5"/>
    </reaction>
</comment>
<comment type="cofactor">
    <cofactor evidence="1">
        <name>Zn(2+)</name>
        <dbReference type="ChEBI" id="CHEBI:29105"/>
    </cofactor>
    <text evidence="1">Binds 1 zinc ion per subunit.</text>
</comment>
<comment type="subunit">
    <text evidence="1">Monomer.</text>
</comment>
<comment type="subcellular location">
    <subcellularLocation>
        <location evidence="1">Cytoplasm</location>
    </subcellularLocation>
</comment>
<comment type="domain">
    <text evidence="1">IleRS has two distinct active sites: one for aminoacylation and one for editing. The misactivated valine is translocated from the active site to the editing site, which sterically excludes the correctly activated isoleucine. The single editing site contains two valyl binding pockets, one specific for each substrate (Val-AMP or Val-tRNA(Ile)).</text>
</comment>
<comment type="similarity">
    <text evidence="1">Belongs to the class-I aminoacyl-tRNA synthetase family. IleS type 1 subfamily.</text>
</comment>
<evidence type="ECO:0000255" key="1">
    <source>
        <dbReference type="HAMAP-Rule" id="MF_02002"/>
    </source>
</evidence>
<feature type="chain" id="PRO_0000098479" description="Isoleucine--tRNA ligase">
    <location>
        <begin position="1"/>
        <end position="930"/>
    </location>
</feature>
<feature type="short sequence motif" description="'HIGH' region">
    <location>
        <begin position="57"/>
        <end position="67"/>
    </location>
</feature>
<feature type="short sequence motif" description="'KMSKS' region">
    <location>
        <begin position="595"/>
        <end position="599"/>
    </location>
</feature>
<feature type="binding site" evidence="1">
    <location>
        <position position="554"/>
    </location>
    <ligand>
        <name>L-isoleucyl-5'-AMP</name>
        <dbReference type="ChEBI" id="CHEBI:178002"/>
    </ligand>
</feature>
<feature type="binding site" evidence="1">
    <location>
        <position position="598"/>
    </location>
    <ligand>
        <name>ATP</name>
        <dbReference type="ChEBI" id="CHEBI:30616"/>
    </ligand>
</feature>
<feature type="binding site" evidence="1">
    <location>
        <position position="888"/>
    </location>
    <ligand>
        <name>Zn(2+)</name>
        <dbReference type="ChEBI" id="CHEBI:29105"/>
    </ligand>
</feature>
<feature type="binding site" evidence="1">
    <location>
        <position position="891"/>
    </location>
    <ligand>
        <name>Zn(2+)</name>
        <dbReference type="ChEBI" id="CHEBI:29105"/>
    </ligand>
</feature>
<feature type="binding site" evidence="1">
    <location>
        <position position="908"/>
    </location>
    <ligand>
        <name>Zn(2+)</name>
        <dbReference type="ChEBI" id="CHEBI:29105"/>
    </ligand>
</feature>
<feature type="binding site" evidence="1">
    <location>
        <position position="911"/>
    </location>
    <ligand>
        <name>Zn(2+)</name>
        <dbReference type="ChEBI" id="CHEBI:29105"/>
    </ligand>
</feature>
<organism>
    <name type="scientific">Streptococcus pneumoniae serotype 4 (strain ATCC BAA-334 / TIGR4)</name>
    <dbReference type="NCBI Taxonomy" id="170187"/>
    <lineage>
        <taxon>Bacteria</taxon>
        <taxon>Bacillati</taxon>
        <taxon>Bacillota</taxon>
        <taxon>Bacilli</taxon>
        <taxon>Lactobacillales</taxon>
        <taxon>Streptococcaceae</taxon>
        <taxon>Streptococcus</taxon>
    </lineage>
</organism>
<keyword id="KW-0030">Aminoacyl-tRNA synthetase</keyword>
<keyword id="KW-0067">ATP-binding</keyword>
<keyword id="KW-0963">Cytoplasm</keyword>
<keyword id="KW-0436">Ligase</keyword>
<keyword id="KW-0479">Metal-binding</keyword>
<keyword id="KW-0547">Nucleotide-binding</keyword>
<keyword id="KW-0648">Protein biosynthesis</keyword>
<keyword id="KW-1185">Reference proteome</keyword>
<keyword id="KW-0862">Zinc</keyword>
<accession>P0CB61</accession>
<accession>Q9ZHB3</accession>